<sequence>MSISQVIDTSFHEEVINSRQPVLVDFWAPWCGPCRMIASTIDEIAHDYKDKLKVVKVNTDQNPTIATEYGIRSIPTVMIFINGKKVDTVVGAVPKLTLLNTLQKHLKST</sequence>
<evidence type="ECO:0000250" key="1"/>
<evidence type="ECO:0000255" key="2">
    <source>
        <dbReference type="PROSITE-ProRule" id="PRU00691"/>
    </source>
</evidence>
<evidence type="ECO:0000305" key="3"/>
<reference key="1">
    <citation type="journal article" date="1994" name="Plant Mol. Biol.">
        <title>Chloroplast encoded thioredoxin genes in the red algae Porphyra yezoensis and Griffithsia pacifica: evolutionary implications.</title>
        <authorList>
            <person name="Reynolds A.E."/>
            <person name="Chesnick J.M."/>
            <person name="Woolford J."/>
            <person name="Cattolica R.A."/>
        </authorList>
    </citation>
    <scope>NUCLEOTIDE SEQUENCE [GENOMIC DNA]</scope>
</reference>
<gene>
    <name type="primary">trxA</name>
</gene>
<comment type="function">
    <text>Participates in various redox reactions through the reversible oxidation of its active center dithiol to a disulfide and catalyzes dithiol-disulfide exchange reactions.</text>
</comment>
<comment type="subcellular location">
    <subcellularLocation>
        <location>Plastid</location>
        <location>Chloroplast</location>
    </subcellularLocation>
</comment>
<comment type="similarity">
    <text evidence="3">Belongs to the thioredoxin family.</text>
</comment>
<dbReference type="EMBL" id="X76611">
    <property type="protein sequence ID" value="CAA54076.1"/>
    <property type="molecule type" value="Genomic_DNA"/>
</dbReference>
<dbReference type="PIR" id="S46522">
    <property type="entry name" value="S46522"/>
</dbReference>
<dbReference type="SMR" id="P50338"/>
<dbReference type="GO" id="GO:0009507">
    <property type="term" value="C:chloroplast"/>
    <property type="evidence" value="ECO:0007669"/>
    <property type="project" value="UniProtKB-SubCell"/>
</dbReference>
<dbReference type="GO" id="GO:0015035">
    <property type="term" value="F:protein-disulfide reductase activity"/>
    <property type="evidence" value="ECO:0007669"/>
    <property type="project" value="InterPro"/>
</dbReference>
<dbReference type="CDD" id="cd02947">
    <property type="entry name" value="TRX_family"/>
    <property type="match status" value="1"/>
</dbReference>
<dbReference type="FunFam" id="3.40.30.10:FF:000001">
    <property type="entry name" value="Thioredoxin"/>
    <property type="match status" value="1"/>
</dbReference>
<dbReference type="Gene3D" id="3.40.30.10">
    <property type="entry name" value="Glutaredoxin"/>
    <property type="match status" value="1"/>
</dbReference>
<dbReference type="InterPro" id="IPR005746">
    <property type="entry name" value="Thioredoxin"/>
</dbReference>
<dbReference type="InterPro" id="IPR036249">
    <property type="entry name" value="Thioredoxin-like_sf"/>
</dbReference>
<dbReference type="InterPro" id="IPR017937">
    <property type="entry name" value="Thioredoxin_CS"/>
</dbReference>
<dbReference type="InterPro" id="IPR013766">
    <property type="entry name" value="Thioredoxin_domain"/>
</dbReference>
<dbReference type="NCBIfam" id="TIGR01068">
    <property type="entry name" value="thioredoxin"/>
    <property type="match status" value="1"/>
</dbReference>
<dbReference type="PANTHER" id="PTHR45663">
    <property type="entry name" value="GEO12009P1"/>
    <property type="match status" value="1"/>
</dbReference>
<dbReference type="PANTHER" id="PTHR45663:SF11">
    <property type="entry name" value="GEO12009P1"/>
    <property type="match status" value="1"/>
</dbReference>
<dbReference type="Pfam" id="PF00085">
    <property type="entry name" value="Thioredoxin"/>
    <property type="match status" value="1"/>
</dbReference>
<dbReference type="PIRSF" id="PIRSF000077">
    <property type="entry name" value="Thioredoxin"/>
    <property type="match status" value="1"/>
</dbReference>
<dbReference type="PRINTS" id="PR00421">
    <property type="entry name" value="THIOREDOXIN"/>
</dbReference>
<dbReference type="SUPFAM" id="SSF52833">
    <property type="entry name" value="Thioredoxin-like"/>
    <property type="match status" value="1"/>
</dbReference>
<dbReference type="PROSITE" id="PS00194">
    <property type="entry name" value="THIOREDOXIN_1"/>
    <property type="match status" value="1"/>
</dbReference>
<dbReference type="PROSITE" id="PS51352">
    <property type="entry name" value="THIOREDOXIN_2"/>
    <property type="match status" value="1"/>
</dbReference>
<protein>
    <recommendedName>
        <fullName>Thioredoxin</fullName>
        <shortName>Trx</shortName>
    </recommendedName>
</protein>
<organism>
    <name type="scientific">Griffithsia pacifica</name>
    <name type="common">Red alga</name>
    <dbReference type="NCBI Taxonomy" id="35689"/>
    <lineage>
        <taxon>Eukaryota</taxon>
        <taxon>Rhodophyta</taxon>
        <taxon>Florideophyceae</taxon>
        <taxon>Rhodymeniophycidae</taxon>
        <taxon>Ceramiales</taxon>
        <taxon>Ceramiaceae</taxon>
        <taxon>Griffithsia</taxon>
    </lineage>
</organism>
<name>THIO_GRIPA</name>
<feature type="chain" id="PRO_0000120069" description="Thioredoxin">
    <location>
        <begin position="1"/>
        <end position="109"/>
    </location>
</feature>
<feature type="domain" description="Thioredoxin" evidence="2">
    <location>
        <begin position="2"/>
        <end position="107"/>
    </location>
</feature>
<feature type="active site" description="Nucleophile" evidence="1">
    <location>
        <position position="31"/>
    </location>
</feature>
<feature type="active site" description="Nucleophile" evidence="1">
    <location>
        <position position="34"/>
    </location>
</feature>
<feature type="site" description="Deprotonates C-terminal active site Cys" evidence="1">
    <location>
        <position position="25"/>
    </location>
</feature>
<feature type="site" description="Contributes to redox potential value" evidence="1">
    <location>
        <position position="32"/>
    </location>
</feature>
<feature type="site" description="Contributes to redox potential value" evidence="1">
    <location>
        <position position="33"/>
    </location>
</feature>
<feature type="disulfide bond" description="Redox-active" evidence="2">
    <location>
        <begin position="31"/>
        <end position="34"/>
    </location>
</feature>
<accession>P50338</accession>
<geneLocation type="chloroplast"/>
<keyword id="KW-0150">Chloroplast</keyword>
<keyword id="KW-1015">Disulfide bond</keyword>
<keyword id="KW-0249">Electron transport</keyword>
<keyword id="KW-0934">Plastid</keyword>
<keyword id="KW-0676">Redox-active center</keyword>
<keyword id="KW-0813">Transport</keyword>
<proteinExistence type="inferred from homology"/>